<proteinExistence type="evidence at protein level"/>
<keyword id="KW-0301">Gamma-carboxyglutamic acid</keyword>
<keyword id="KW-0872">Ion channel impairing toxin</keyword>
<keyword id="KW-1028">Ionotropic glutamate receptor inhibitor</keyword>
<keyword id="KW-0528">Neurotoxin</keyword>
<keyword id="KW-0629">Postsynaptic neurotoxin</keyword>
<keyword id="KW-0964">Secreted</keyword>
<keyword id="KW-0800">Toxin</keyword>
<feature type="peptide" id="PRO_0000439519" description="Conantokin-Oc">
    <location>
        <begin position="1"/>
        <end position="22"/>
    </location>
</feature>
<feature type="region of interest" description="Disordered" evidence="2">
    <location>
        <begin position="1"/>
        <end position="22"/>
    </location>
</feature>
<feature type="modified residue" description="4-carboxyglutamate" evidence="3">
    <location>
        <position position="3"/>
    </location>
</feature>
<feature type="modified residue" description="4-carboxyglutamate" evidence="3">
    <location>
        <position position="4"/>
    </location>
</feature>
<feature type="modified residue" description="4-carboxyglutamate" evidence="3">
    <location>
        <position position="10"/>
    </location>
</feature>
<feature type="modified residue" description="4-carboxyglutamate" evidence="3">
    <location>
        <position position="18"/>
    </location>
</feature>
<reference key="1">
    <citation type="journal article" date="2006" name="Prog. Mol. Subcell. Biol.">
        <title>Hyperhydroxylation: a new strategy for neuronal targeting by venomous marine molluscs.</title>
        <authorList>
            <person name="Franco A."/>
            <person name="Pisarewicz K."/>
            <person name="Moller C."/>
            <person name="Mora D."/>
            <person name="Fields G.B."/>
            <person name="Mari F."/>
        </authorList>
    </citation>
    <scope>REVIEW</scope>
    <scope>GAMMA-CARBOXYGLUTAMATION AT GLU-3; GLU-4; GLU-10 AND GLU-18</scope>
</reference>
<comment type="function">
    <text evidence="1">Conantokins inhibit N-methyl-D-aspartate (NMDA) receptors.</text>
</comment>
<comment type="subcellular location">
    <subcellularLocation>
        <location evidence="1">Secreted</location>
    </subcellularLocation>
</comment>
<comment type="tissue specificity">
    <text evidence="4">Expressed by the venom duct.</text>
</comment>
<comment type="miscellaneous">
    <text evidence="4">The mature peptide does not contain cysteine residue.</text>
</comment>
<dbReference type="GO" id="GO:0005576">
    <property type="term" value="C:extracellular region"/>
    <property type="evidence" value="ECO:0007669"/>
    <property type="project" value="UniProtKB-SubCell"/>
</dbReference>
<dbReference type="GO" id="GO:0035792">
    <property type="term" value="C:host cell postsynaptic membrane"/>
    <property type="evidence" value="ECO:0007669"/>
    <property type="project" value="UniProtKB-KW"/>
</dbReference>
<dbReference type="GO" id="GO:0099106">
    <property type="term" value="F:ion channel regulator activity"/>
    <property type="evidence" value="ECO:0007669"/>
    <property type="project" value="UniProtKB-KW"/>
</dbReference>
<dbReference type="GO" id="GO:0090729">
    <property type="term" value="F:toxin activity"/>
    <property type="evidence" value="ECO:0007669"/>
    <property type="project" value="UniProtKB-KW"/>
</dbReference>
<evidence type="ECO:0000250" key="1"/>
<evidence type="ECO:0000256" key="2">
    <source>
        <dbReference type="SAM" id="MobiDB-lite"/>
    </source>
</evidence>
<evidence type="ECO:0000303" key="3">
    <source>
    </source>
</evidence>
<evidence type="ECO:0000305" key="4"/>
<name>CKO_CONOH</name>
<organism>
    <name type="scientific">Conus ochroleucus</name>
    <name type="common">Perfect cone</name>
    <name type="synonym">Graphiconus ochroleucus</name>
    <dbReference type="NCBI Taxonomy" id="72282"/>
    <lineage>
        <taxon>Eukaryota</taxon>
        <taxon>Metazoa</taxon>
        <taxon>Spiralia</taxon>
        <taxon>Lophotrochozoa</taxon>
        <taxon>Mollusca</taxon>
        <taxon>Gastropoda</taxon>
        <taxon>Caenogastropoda</taxon>
        <taxon>Neogastropoda</taxon>
        <taxon>Conoidea</taxon>
        <taxon>Conidae</taxon>
        <taxon>Conus</taxon>
        <taxon>Phasmoconus</taxon>
    </lineage>
</organism>
<protein>
    <recommendedName>
        <fullName evidence="3">Conantokin-Oc</fullName>
        <shortName evidence="3">Con-Oc</shortName>
    </recommendedName>
</protein>
<accession>P0DP00</accession>
<sequence length="22" mass="2431">GEEERKAMAELEAKKAQEALKA</sequence>